<dbReference type="EMBL" id="X66732">
    <property type="protein sequence ID" value="CAA47270.1"/>
    <property type="molecule type" value="Genomic_DNA"/>
</dbReference>
<dbReference type="EMBL" id="X95966">
    <property type="protein sequence ID" value="CAA65203.1"/>
    <property type="molecule type" value="Genomic_DNA"/>
</dbReference>
<dbReference type="EMBL" id="Z48008">
    <property type="protein sequence ID" value="CAA88071.1"/>
    <property type="molecule type" value="Genomic_DNA"/>
</dbReference>
<dbReference type="EMBL" id="Z74307">
    <property type="protein sequence ID" value="CAA98831.1"/>
    <property type="molecule type" value="Genomic_DNA"/>
</dbReference>
<dbReference type="EMBL" id="BK006938">
    <property type="protein sequence ID" value="DAA11857.1"/>
    <property type="molecule type" value="Genomic_DNA"/>
</dbReference>
<dbReference type="PIR" id="S50992">
    <property type="entry name" value="S50992"/>
</dbReference>
<dbReference type="RefSeq" id="NP_010294.1">
    <property type="nucleotide sequence ID" value="NM_001180319.1"/>
</dbReference>
<dbReference type="SMR" id="P32568"/>
<dbReference type="BioGRID" id="32062">
    <property type="interactions" value="146"/>
</dbReference>
<dbReference type="FunCoup" id="P32568">
    <property type="interactions" value="362"/>
</dbReference>
<dbReference type="IntAct" id="P32568">
    <property type="interactions" value="63"/>
</dbReference>
<dbReference type="MINT" id="P32568"/>
<dbReference type="STRING" id="4932.YDR011W"/>
<dbReference type="TCDB" id="3.A.1.205.2">
    <property type="family name" value="the atp-binding cassette (abc) superfamily"/>
</dbReference>
<dbReference type="GlyCosmos" id="P32568">
    <property type="glycosylation" value="6 sites, No reported glycans"/>
</dbReference>
<dbReference type="GlyGen" id="P32568">
    <property type="glycosylation" value="6 sites"/>
</dbReference>
<dbReference type="iPTMnet" id="P32568"/>
<dbReference type="PaxDb" id="4932-YDR011W"/>
<dbReference type="PeptideAtlas" id="P32568"/>
<dbReference type="EnsemblFungi" id="YDR011W_mRNA">
    <property type="protein sequence ID" value="YDR011W"/>
    <property type="gene ID" value="YDR011W"/>
</dbReference>
<dbReference type="GeneID" id="851574"/>
<dbReference type="KEGG" id="sce:YDR011W"/>
<dbReference type="AGR" id="SGD:S000002418"/>
<dbReference type="SGD" id="S000002418">
    <property type="gene designation" value="SNQ2"/>
</dbReference>
<dbReference type="VEuPathDB" id="FungiDB:YDR011W"/>
<dbReference type="eggNOG" id="KOG0065">
    <property type="taxonomic scope" value="Eukaryota"/>
</dbReference>
<dbReference type="GeneTree" id="ENSGT00940000176297"/>
<dbReference type="HOGENOM" id="CLU_000604_35_0_1"/>
<dbReference type="InParanoid" id="P32568"/>
<dbReference type="OMA" id="FAHRCCG"/>
<dbReference type="OrthoDB" id="245989at2759"/>
<dbReference type="BioCyc" id="YEAST:G3O-29630-MONOMER"/>
<dbReference type="BioGRID-ORCS" id="851574">
    <property type="hits" value="5 hits in 10 CRISPR screens"/>
</dbReference>
<dbReference type="PRO" id="PR:P32568"/>
<dbReference type="Proteomes" id="UP000002311">
    <property type="component" value="Chromosome IV"/>
</dbReference>
<dbReference type="RNAct" id="P32568">
    <property type="molecule type" value="protein"/>
</dbReference>
<dbReference type="GO" id="GO:0071944">
    <property type="term" value="C:cell periphery"/>
    <property type="evidence" value="ECO:0007005"/>
    <property type="project" value="SGD"/>
</dbReference>
<dbReference type="GO" id="GO:0005739">
    <property type="term" value="C:mitochondrion"/>
    <property type="evidence" value="ECO:0007005"/>
    <property type="project" value="SGD"/>
</dbReference>
<dbReference type="GO" id="GO:0005886">
    <property type="term" value="C:plasma membrane"/>
    <property type="evidence" value="ECO:0000314"/>
    <property type="project" value="SGD"/>
</dbReference>
<dbReference type="GO" id="GO:0008559">
    <property type="term" value="F:ABC-type xenobiotic transporter activity"/>
    <property type="evidence" value="ECO:0000250"/>
    <property type="project" value="SGD"/>
</dbReference>
<dbReference type="GO" id="GO:0005524">
    <property type="term" value="F:ATP binding"/>
    <property type="evidence" value="ECO:0007669"/>
    <property type="project" value="UniProtKB-KW"/>
</dbReference>
<dbReference type="GO" id="GO:0016887">
    <property type="term" value="F:ATP hydrolysis activity"/>
    <property type="evidence" value="ECO:0007669"/>
    <property type="project" value="InterPro"/>
</dbReference>
<dbReference type="GO" id="GO:0030003">
    <property type="term" value="P:intracellular monoatomic cation homeostasis"/>
    <property type="evidence" value="ECO:0000315"/>
    <property type="project" value="SGD"/>
</dbReference>
<dbReference type="GO" id="GO:1990961">
    <property type="term" value="P:xenobiotic detoxification by transmembrane export across the plasma membrane"/>
    <property type="evidence" value="ECO:0007669"/>
    <property type="project" value="InterPro"/>
</dbReference>
<dbReference type="CDD" id="cd03233">
    <property type="entry name" value="ABCG_PDR_domain1"/>
    <property type="match status" value="1"/>
</dbReference>
<dbReference type="CDD" id="cd03232">
    <property type="entry name" value="ABCG_PDR_domain2"/>
    <property type="match status" value="1"/>
</dbReference>
<dbReference type="FunFam" id="3.40.50.300:FF:000054">
    <property type="entry name" value="ABC multidrug transporter atrF"/>
    <property type="match status" value="1"/>
</dbReference>
<dbReference type="FunFam" id="3.40.50.300:FF:001460">
    <property type="entry name" value="ATP-binding cassette transporter"/>
    <property type="match status" value="1"/>
</dbReference>
<dbReference type="Gene3D" id="3.40.50.300">
    <property type="entry name" value="P-loop containing nucleotide triphosphate hydrolases"/>
    <property type="match status" value="2"/>
</dbReference>
<dbReference type="InterPro" id="IPR003593">
    <property type="entry name" value="AAA+_ATPase"/>
</dbReference>
<dbReference type="InterPro" id="IPR013525">
    <property type="entry name" value="ABC2_TM"/>
</dbReference>
<dbReference type="InterPro" id="IPR029481">
    <property type="entry name" value="ABC_trans_N"/>
</dbReference>
<dbReference type="InterPro" id="IPR003439">
    <property type="entry name" value="ABC_transporter-like_ATP-bd"/>
</dbReference>
<dbReference type="InterPro" id="IPR017871">
    <property type="entry name" value="ABC_transporter-like_CS"/>
</dbReference>
<dbReference type="InterPro" id="IPR043926">
    <property type="entry name" value="ABCG_dom"/>
</dbReference>
<dbReference type="InterPro" id="IPR034001">
    <property type="entry name" value="ABCG_PDR_1"/>
</dbReference>
<dbReference type="InterPro" id="IPR034003">
    <property type="entry name" value="ABCG_PDR_2"/>
</dbReference>
<dbReference type="InterPro" id="IPR005285">
    <property type="entry name" value="Drug-R_PDR/CDR"/>
</dbReference>
<dbReference type="InterPro" id="IPR027417">
    <property type="entry name" value="P-loop_NTPase"/>
</dbReference>
<dbReference type="InterPro" id="IPR010929">
    <property type="entry name" value="PDR_CDR_ABC"/>
</dbReference>
<dbReference type="NCBIfam" id="TIGR00956">
    <property type="entry name" value="3a01205"/>
    <property type="match status" value="1"/>
</dbReference>
<dbReference type="PANTHER" id="PTHR19241">
    <property type="entry name" value="ATP-BINDING CASSETTE TRANSPORTER"/>
    <property type="match status" value="1"/>
</dbReference>
<dbReference type="Pfam" id="PF01061">
    <property type="entry name" value="ABC2_membrane"/>
    <property type="match status" value="2"/>
</dbReference>
<dbReference type="Pfam" id="PF19055">
    <property type="entry name" value="ABC2_membrane_7"/>
    <property type="match status" value="1"/>
</dbReference>
<dbReference type="Pfam" id="PF00005">
    <property type="entry name" value="ABC_tran"/>
    <property type="match status" value="2"/>
</dbReference>
<dbReference type="Pfam" id="PF14510">
    <property type="entry name" value="ABC_trans_N"/>
    <property type="match status" value="1"/>
</dbReference>
<dbReference type="Pfam" id="PF06422">
    <property type="entry name" value="PDR_CDR"/>
    <property type="match status" value="1"/>
</dbReference>
<dbReference type="SMART" id="SM00382">
    <property type="entry name" value="AAA"/>
    <property type="match status" value="2"/>
</dbReference>
<dbReference type="SUPFAM" id="SSF52540">
    <property type="entry name" value="P-loop containing nucleoside triphosphate hydrolases"/>
    <property type="match status" value="2"/>
</dbReference>
<dbReference type="PROSITE" id="PS00211">
    <property type="entry name" value="ABC_TRANSPORTER_1"/>
    <property type="match status" value="1"/>
</dbReference>
<dbReference type="PROSITE" id="PS50893">
    <property type="entry name" value="ABC_TRANSPORTER_2"/>
    <property type="match status" value="2"/>
</dbReference>
<proteinExistence type="evidence at protein level"/>
<gene>
    <name type="primary">SNQ2</name>
    <name type="ordered locus">YDR011W</name>
    <name type="ORF">YD8119.16</name>
</gene>
<keyword id="KW-0007">Acetylation</keyword>
<keyword id="KW-0067">ATP-binding</keyword>
<keyword id="KW-0903">Direct protein sequencing</keyword>
<keyword id="KW-0325">Glycoprotein</keyword>
<keyword id="KW-0472">Membrane</keyword>
<keyword id="KW-0547">Nucleotide-binding</keyword>
<keyword id="KW-0597">Phosphoprotein</keyword>
<keyword id="KW-1185">Reference proteome</keyword>
<keyword id="KW-0677">Repeat</keyword>
<keyword id="KW-0812">Transmembrane</keyword>
<keyword id="KW-1133">Transmembrane helix</keyword>
<keyword id="KW-0813">Transport</keyword>
<name>SNQ2_YEAST</name>
<evidence type="ECO:0000255" key="1"/>
<evidence type="ECO:0000255" key="2">
    <source>
        <dbReference type="PROSITE-ProRule" id="PRU00434"/>
    </source>
</evidence>
<evidence type="ECO:0000256" key="3">
    <source>
        <dbReference type="SAM" id="MobiDB-lite"/>
    </source>
</evidence>
<evidence type="ECO:0000269" key="4">
    <source>
    </source>
</evidence>
<evidence type="ECO:0000305" key="5"/>
<evidence type="ECO:0007744" key="6">
    <source>
    </source>
</evidence>
<evidence type="ECO:0007744" key="7">
    <source>
    </source>
</evidence>
<evidence type="ECO:0007744" key="8">
    <source>
    </source>
</evidence>
<evidence type="ECO:0007744" key="9">
    <source>
    </source>
</evidence>
<comment type="function">
    <text>Could be an ATP-dependent permease. Confers hyper-resistance to the mutagens 4-nitroquinoline-N-oxide (4-NQO) and triaziquone, as well as to the chemicals sulphomethuron methyl phenanthroline when present in multiple copies. Exhibits nucleoside triphosphatase activity.</text>
</comment>
<comment type="interaction">
    <interactant intactId="EBI-17590">
        <id>P32568</id>
    </interactant>
    <interactant intactId="EBI-20799445">
        <id>P36062</id>
        <label>AVT3</label>
    </interactant>
    <organismsDiffer>false</organismsDiffer>
    <experiments>2</experiments>
</comment>
<comment type="interaction">
    <interactant intactId="EBI-17590">
        <id>P32568</id>
    </interactant>
    <interactant intactId="EBI-8759">
        <id>P32465</id>
        <label>HXT1</label>
    </interactant>
    <organismsDiffer>false</organismsDiffer>
    <experiments>3</experiments>
</comment>
<comment type="interaction">
    <interactant intactId="EBI-17590">
        <id>P32568</id>
    </interactant>
    <interactant intactId="EBI-13038">
        <id>P33302</id>
        <label>PDR5</label>
    </interactant>
    <organismsDiffer>false</organismsDiffer>
    <experiments>5</experiments>
</comment>
<comment type="subcellular location">
    <subcellularLocation>
        <location>Membrane</location>
        <topology>Multi-pass membrane protein</topology>
    </subcellularLocation>
</comment>
<comment type="miscellaneous">
    <text evidence="4">Present with 1300 molecules/cell in log phase SD medium.</text>
</comment>
<comment type="similarity">
    <text evidence="5">Belongs to the ABC transporter superfamily. ABCG family. PDR (TC 3.A.1.205) subfamily.</text>
</comment>
<feature type="initiator methionine" description="Removed" evidence="9">
    <location>
        <position position="1"/>
    </location>
</feature>
<feature type="chain" id="PRO_0000093441" description="Protein SNQ2">
    <location>
        <begin position="2"/>
        <end position="1501"/>
    </location>
</feature>
<feature type="transmembrane region" description="Helical" evidence="1">
    <location>
        <begin position="521"/>
        <end position="541"/>
    </location>
</feature>
<feature type="transmembrane region" description="Helical" evidence="1">
    <location>
        <begin position="554"/>
        <end position="574"/>
    </location>
</feature>
<feature type="transmembrane region" description="Helical" evidence="1">
    <location>
        <begin position="600"/>
        <end position="620"/>
    </location>
</feature>
<feature type="transmembrane region" description="Helical" evidence="1">
    <location>
        <begin position="628"/>
        <end position="648"/>
    </location>
</feature>
<feature type="transmembrane region" description="Helical" evidence="1">
    <location>
        <begin position="664"/>
        <end position="680"/>
    </location>
</feature>
<feature type="transmembrane region" description="Helical" evidence="1">
    <location>
        <begin position="771"/>
        <end position="789"/>
    </location>
</feature>
<feature type="transmembrane region" description="Helical" evidence="1">
    <location>
        <begin position="1190"/>
        <end position="1212"/>
    </location>
</feature>
<feature type="transmembrane region" description="Helical" evidence="1">
    <location>
        <begin position="1216"/>
        <end position="1236"/>
    </location>
</feature>
<feature type="transmembrane region" description="Helical" evidence="1">
    <location>
        <begin position="1277"/>
        <end position="1296"/>
    </location>
</feature>
<feature type="transmembrane region" description="Helical" evidence="1">
    <location>
        <begin position="1333"/>
        <end position="1352"/>
    </location>
</feature>
<feature type="transmembrane region" description="Helical" evidence="1">
    <location>
        <begin position="1455"/>
        <end position="1475"/>
    </location>
</feature>
<feature type="domain" description="ABC transporter 1" evidence="2">
    <location>
        <begin position="161"/>
        <end position="410"/>
    </location>
</feature>
<feature type="domain" description="ABC transporter 2" evidence="2">
    <location>
        <begin position="853"/>
        <end position="1095"/>
    </location>
</feature>
<feature type="region of interest" description="Disordered" evidence="3">
    <location>
        <begin position="1"/>
        <end position="56"/>
    </location>
</feature>
<feature type="compositionally biased region" description="Polar residues" evidence="3">
    <location>
        <begin position="1"/>
        <end position="17"/>
    </location>
</feature>
<feature type="compositionally biased region" description="Low complexity" evidence="3">
    <location>
        <begin position="18"/>
        <end position="30"/>
    </location>
</feature>
<feature type="compositionally biased region" description="Basic and acidic residues" evidence="3">
    <location>
        <begin position="34"/>
        <end position="49"/>
    </location>
</feature>
<feature type="binding site" evidence="2">
    <location>
        <begin position="889"/>
        <end position="896"/>
    </location>
    <ligand>
        <name>ATP</name>
        <dbReference type="ChEBI" id="CHEBI:30616"/>
    </ligand>
</feature>
<feature type="modified residue" description="N-acetylserine" evidence="9">
    <location>
        <position position="2"/>
    </location>
</feature>
<feature type="modified residue" description="Phosphoserine" evidence="6">
    <location>
        <position position="26"/>
    </location>
</feature>
<feature type="modified residue" description="Phosphoserine" evidence="8">
    <location>
        <position position="29"/>
    </location>
</feature>
<feature type="modified residue" description="Phosphoserine" evidence="6 7">
    <location>
        <position position="64"/>
    </location>
</feature>
<feature type="modified residue" description="Phosphoserine" evidence="6 7 8">
    <location>
        <position position="80"/>
    </location>
</feature>
<feature type="modified residue" description="Phosphoserine" evidence="6 7">
    <location>
        <position position="86"/>
    </location>
</feature>
<feature type="modified residue" description="Phosphothreonine" evidence="6 8">
    <location>
        <position position="1153"/>
    </location>
</feature>
<feature type="glycosylation site" description="N-linked (GlcNAc...) asparagine" evidence="1">
    <location>
        <position position="273"/>
    </location>
</feature>
<feature type="glycosylation site" description="N-linked (GlcNAc...) asparagine" evidence="1">
    <location>
        <position position="334"/>
    </location>
</feature>
<feature type="glycosylation site" description="N-linked (GlcNAc...) asparagine" evidence="1">
    <location>
        <position position="518"/>
    </location>
</feature>
<feature type="glycosylation site" description="N-linked (GlcNAc...) asparagine" evidence="1">
    <location>
        <position position="730"/>
    </location>
</feature>
<feature type="glycosylation site" description="N-linked (GlcNAc...) asparagine" evidence="1">
    <location>
        <position position="874"/>
    </location>
</feature>
<feature type="glycosylation site" description="N-linked (GlcNAc...) asparagine" evidence="1">
    <location>
        <position position="1401"/>
    </location>
</feature>
<feature type="sequence conflict" description="In Ref. 1; CAA47270." evidence="5" ref="1">
    <original>V</original>
    <variation>E</variation>
    <location>
        <position position="78"/>
    </location>
</feature>
<reference key="1">
    <citation type="journal article" date="1993" name="Mol. Gen. Genet.">
        <title>Gene SNQ2 of Saccharomyces cerevisiae, which confers resistance to 4-nitroquinoline-N-oxide and other chemicals, encodes a 169 kDa protein homologous to ATP-dependent permeases.</title>
        <authorList>
            <person name="Servos J."/>
            <person name="Haase E."/>
            <person name="Brendel M."/>
        </authorList>
    </citation>
    <scope>NUCLEOTIDE SEQUENCE [GENOMIC DNA]</scope>
</reference>
<reference key="2">
    <citation type="journal article" date="1996" name="Yeast">
        <title>Sequencing and analysis of a 35.4 kb region on the right arm of chromosome IV from Saccharomyces cerevisiae reveal 23 open reading frames.</title>
        <authorList>
            <person name="Eide L.G."/>
            <person name="Sander C."/>
            <person name="Prydz H."/>
        </authorList>
    </citation>
    <scope>NUCLEOTIDE SEQUENCE [GENOMIC DNA]</scope>
</reference>
<reference key="3">
    <citation type="journal article" date="1997" name="Nature">
        <title>The nucleotide sequence of Saccharomyces cerevisiae chromosome IV.</title>
        <authorList>
            <person name="Jacq C."/>
            <person name="Alt-Moerbe J."/>
            <person name="Andre B."/>
            <person name="Arnold W."/>
            <person name="Bahr A."/>
            <person name="Ballesta J.P.G."/>
            <person name="Bargues M."/>
            <person name="Baron L."/>
            <person name="Becker A."/>
            <person name="Biteau N."/>
            <person name="Bloecker H."/>
            <person name="Blugeon C."/>
            <person name="Boskovic J."/>
            <person name="Brandt P."/>
            <person name="Brueckner M."/>
            <person name="Buitrago M.J."/>
            <person name="Coster F."/>
            <person name="Delaveau T."/>
            <person name="del Rey F."/>
            <person name="Dujon B."/>
            <person name="Eide L.G."/>
            <person name="Garcia-Cantalejo J.M."/>
            <person name="Goffeau A."/>
            <person name="Gomez-Peris A."/>
            <person name="Granotier C."/>
            <person name="Hanemann V."/>
            <person name="Hankeln T."/>
            <person name="Hoheisel J.D."/>
            <person name="Jaeger W."/>
            <person name="Jimenez A."/>
            <person name="Jonniaux J.-L."/>
            <person name="Kraemer C."/>
            <person name="Kuester H."/>
            <person name="Laamanen P."/>
            <person name="Legros Y."/>
            <person name="Louis E.J."/>
            <person name="Moeller-Rieker S."/>
            <person name="Monnet A."/>
            <person name="Moro M."/>
            <person name="Mueller-Auer S."/>
            <person name="Nussbaumer B."/>
            <person name="Paricio N."/>
            <person name="Paulin L."/>
            <person name="Perea J."/>
            <person name="Perez-Alonso M."/>
            <person name="Perez-Ortin J.E."/>
            <person name="Pohl T.M."/>
            <person name="Prydz H."/>
            <person name="Purnelle B."/>
            <person name="Rasmussen S.W."/>
            <person name="Remacha M.A."/>
            <person name="Revuelta J.L."/>
            <person name="Rieger M."/>
            <person name="Salom D."/>
            <person name="Saluz H.P."/>
            <person name="Saiz J.E."/>
            <person name="Saren A.-M."/>
            <person name="Schaefer M."/>
            <person name="Scharfe M."/>
            <person name="Schmidt E.R."/>
            <person name="Schneider C."/>
            <person name="Scholler P."/>
            <person name="Schwarz S."/>
            <person name="Soler-Mira A."/>
            <person name="Urrestarazu L.A."/>
            <person name="Verhasselt P."/>
            <person name="Vissers S."/>
            <person name="Voet M."/>
            <person name="Volckaert G."/>
            <person name="Wagner G."/>
            <person name="Wambutt R."/>
            <person name="Wedler E."/>
            <person name="Wedler H."/>
            <person name="Woelfl S."/>
            <person name="Harris D.E."/>
            <person name="Bowman S."/>
            <person name="Brown D."/>
            <person name="Churcher C.M."/>
            <person name="Connor R."/>
            <person name="Dedman K."/>
            <person name="Gentles S."/>
            <person name="Hamlin N."/>
            <person name="Hunt S."/>
            <person name="Jones L."/>
            <person name="McDonald S."/>
            <person name="Murphy L.D."/>
            <person name="Niblett D."/>
            <person name="Odell C."/>
            <person name="Oliver K."/>
            <person name="Rajandream M.A."/>
            <person name="Richards C."/>
            <person name="Shore L."/>
            <person name="Walsh S.V."/>
            <person name="Barrell B.G."/>
            <person name="Dietrich F.S."/>
            <person name="Mulligan J.T."/>
            <person name="Allen E."/>
            <person name="Araujo R."/>
            <person name="Aviles E."/>
            <person name="Berno A."/>
            <person name="Carpenter J."/>
            <person name="Chen E."/>
            <person name="Cherry J.M."/>
            <person name="Chung E."/>
            <person name="Duncan M."/>
            <person name="Hunicke-Smith S."/>
            <person name="Hyman R.W."/>
            <person name="Komp C."/>
            <person name="Lashkari D."/>
            <person name="Lew H."/>
            <person name="Lin D."/>
            <person name="Mosedale D."/>
            <person name="Nakahara K."/>
            <person name="Namath A."/>
            <person name="Oefner P."/>
            <person name="Oh C."/>
            <person name="Petel F.X."/>
            <person name="Roberts D."/>
            <person name="Schramm S."/>
            <person name="Schroeder M."/>
            <person name="Shogren T."/>
            <person name="Shroff N."/>
            <person name="Winant A."/>
            <person name="Yelton M.A."/>
            <person name="Botstein D."/>
            <person name="Davis R.W."/>
            <person name="Johnston M."/>
            <person name="Andrews S."/>
            <person name="Brinkman R."/>
            <person name="Cooper J."/>
            <person name="Ding H."/>
            <person name="Du Z."/>
            <person name="Favello A."/>
            <person name="Fulton L."/>
            <person name="Gattung S."/>
            <person name="Greco T."/>
            <person name="Hallsworth K."/>
            <person name="Hawkins J."/>
            <person name="Hillier L.W."/>
            <person name="Jier M."/>
            <person name="Johnson D."/>
            <person name="Johnston L."/>
            <person name="Kirsten J."/>
            <person name="Kucaba T."/>
            <person name="Langston Y."/>
            <person name="Latreille P."/>
            <person name="Le T."/>
            <person name="Mardis E."/>
            <person name="Menezes S."/>
            <person name="Miller N."/>
            <person name="Nhan M."/>
            <person name="Pauley A."/>
            <person name="Peluso D."/>
            <person name="Rifkin L."/>
            <person name="Riles L."/>
            <person name="Taich A."/>
            <person name="Trevaskis E."/>
            <person name="Vignati D."/>
            <person name="Wilcox L."/>
            <person name="Wohldman P."/>
            <person name="Vaudin M."/>
            <person name="Wilson R."/>
            <person name="Waterston R."/>
            <person name="Albermann K."/>
            <person name="Hani J."/>
            <person name="Heumann K."/>
            <person name="Kleine K."/>
            <person name="Mewes H.-W."/>
            <person name="Zollner A."/>
            <person name="Zaccaria P."/>
        </authorList>
    </citation>
    <scope>NUCLEOTIDE SEQUENCE [LARGE SCALE GENOMIC DNA]</scope>
    <source>
        <strain>ATCC 204508 / S288c</strain>
    </source>
</reference>
<reference key="4">
    <citation type="journal article" date="2014" name="G3 (Bethesda)">
        <title>The reference genome sequence of Saccharomyces cerevisiae: Then and now.</title>
        <authorList>
            <person name="Engel S.R."/>
            <person name="Dietrich F.S."/>
            <person name="Fisk D.G."/>
            <person name="Binkley G."/>
            <person name="Balakrishnan R."/>
            <person name="Costanzo M.C."/>
            <person name="Dwight S.S."/>
            <person name="Hitz B.C."/>
            <person name="Karra K."/>
            <person name="Nash R.S."/>
            <person name="Weng S."/>
            <person name="Wong E.D."/>
            <person name="Lloyd P."/>
            <person name="Skrzypek M.S."/>
            <person name="Miyasato S.R."/>
            <person name="Simison M."/>
            <person name="Cherry J.M."/>
        </authorList>
    </citation>
    <scope>GENOME REANNOTATION</scope>
    <source>
        <strain>ATCC 204508 / S288c</strain>
    </source>
</reference>
<reference key="5">
    <citation type="journal article" date="1995" name="J. Biol. Chem.">
        <title>Identification and characterization of SNQ2, a new multidrug ATP binding cassette transporter of the yeast plasma membrane.</title>
        <authorList>
            <person name="Decottignies A."/>
            <person name="Lambert L."/>
            <person name="Catty P."/>
            <person name="Degand H."/>
            <person name="Epping E.A."/>
            <person name="Moye-Rowley W.S."/>
            <person name="Balzi E."/>
            <person name="Goffeau A."/>
        </authorList>
    </citation>
    <scope>CHARACTERIZATION</scope>
    <scope>PROTEIN SEQUENCE OF 1243-1247</scope>
</reference>
<reference key="6">
    <citation type="journal article" date="2003" name="Nature">
        <title>Global analysis of protein expression in yeast.</title>
        <authorList>
            <person name="Ghaemmaghami S."/>
            <person name="Huh W.-K."/>
            <person name="Bower K."/>
            <person name="Howson R.W."/>
            <person name="Belle A."/>
            <person name="Dephoure N."/>
            <person name="O'Shea E.K."/>
            <person name="Weissman J.S."/>
        </authorList>
    </citation>
    <scope>LEVEL OF PROTEIN EXPRESSION [LARGE SCALE ANALYSIS]</scope>
</reference>
<reference key="7">
    <citation type="journal article" date="2007" name="J. Proteome Res.">
        <title>Large-scale phosphorylation analysis of alpha-factor-arrested Saccharomyces cerevisiae.</title>
        <authorList>
            <person name="Li X."/>
            <person name="Gerber S.A."/>
            <person name="Rudner A.D."/>
            <person name="Beausoleil S.A."/>
            <person name="Haas W."/>
            <person name="Villen J."/>
            <person name="Elias J.E."/>
            <person name="Gygi S.P."/>
        </authorList>
    </citation>
    <scope>PHOSPHORYLATION [LARGE SCALE ANALYSIS] AT SER-26; SER-64; SER-80; SER-86 AND THR-1153</scope>
    <scope>IDENTIFICATION BY MASS SPECTROMETRY [LARGE SCALE ANALYSIS]</scope>
    <source>
        <strain>ADR376</strain>
    </source>
</reference>
<reference key="8">
    <citation type="journal article" date="2008" name="Mol. Cell. Proteomics">
        <title>A multidimensional chromatography technology for in-depth phosphoproteome analysis.</title>
        <authorList>
            <person name="Albuquerque C.P."/>
            <person name="Smolka M.B."/>
            <person name="Payne S.H."/>
            <person name="Bafna V."/>
            <person name="Eng J."/>
            <person name="Zhou H."/>
        </authorList>
    </citation>
    <scope>PHOSPHORYLATION [LARGE SCALE ANALYSIS] AT SER-64; SER-80 AND SER-86</scope>
    <scope>IDENTIFICATION BY MASS SPECTROMETRY [LARGE SCALE ANALYSIS]</scope>
</reference>
<reference key="9">
    <citation type="journal article" date="2009" name="Science">
        <title>Global analysis of Cdk1 substrate phosphorylation sites provides insights into evolution.</title>
        <authorList>
            <person name="Holt L.J."/>
            <person name="Tuch B.B."/>
            <person name="Villen J."/>
            <person name="Johnson A.D."/>
            <person name="Gygi S.P."/>
            <person name="Morgan D.O."/>
        </authorList>
    </citation>
    <scope>PHOSPHORYLATION [LARGE SCALE ANALYSIS] AT SER-29; SER-80 AND THR-1153</scope>
    <scope>IDENTIFICATION BY MASS SPECTROMETRY [LARGE SCALE ANALYSIS]</scope>
</reference>
<reference key="10">
    <citation type="journal article" date="2012" name="Proc. Natl. Acad. Sci. U.S.A.">
        <title>N-terminal acetylome analyses and functional insights of the N-terminal acetyltransferase NatB.</title>
        <authorList>
            <person name="Van Damme P."/>
            <person name="Lasa M."/>
            <person name="Polevoda B."/>
            <person name="Gazquez C."/>
            <person name="Elosegui-Artola A."/>
            <person name="Kim D.S."/>
            <person name="De Juan-Pardo E."/>
            <person name="Demeyer K."/>
            <person name="Hole K."/>
            <person name="Larrea E."/>
            <person name="Timmerman E."/>
            <person name="Prieto J."/>
            <person name="Arnesen T."/>
            <person name="Sherman F."/>
            <person name="Gevaert K."/>
            <person name="Aldabe R."/>
        </authorList>
    </citation>
    <scope>ACETYLATION [LARGE SCALE ANALYSIS] AT SER-2</scope>
    <scope>CLEAVAGE OF INITIATOR METHIONINE [LARGE SCALE ANALYSIS]</scope>
    <scope>IDENTIFICATION BY MASS SPECTROMETRY [LARGE SCALE ANALYSIS]</scope>
</reference>
<organism>
    <name type="scientific">Saccharomyces cerevisiae (strain ATCC 204508 / S288c)</name>
    <name type="common">Baker's yeast</name>
    <dbReference type="NCBI Taxonomy" id="559292"/>
    <lineage>
        <taxon>Eukaryota</taxon>
        <taxon>Fungi</taxon>
        <taxon>Dikarya</taxon>
        <taxon>Ascomycota</taxon>
        <taxon>Saccharomycotina</taxon>
        <taxon>Saccharomycetes</taxon>
        <taxon>Saccharomycetales</taxon>
        <taxon>Saccharomycetaceae</taxon>
        <taxon>Saccharomyces</taxon>
    </lineage>
</organism>
<protein>
    <recommendedName>
        <fullName>Protein SNQ2</fullName>
    </recommendedName>
</protein>
<accession>P32568</accession>
<accession>D6VRZ7</accession>
<sequence length="1501" mass="168767">MSNIKSTQDSSHNAVARSSSASFAASEESFTGITHDKDEQSDTPADKLTKMLTGPARDTASQISATVSEMAPDVVSKVESFADALSRHTTRSGAFNMDSDSDDGFDAHAIFESFVRDADEQGIHIRKAGVTIEDVSAKGVDASALEGATFGNILCLPLTIFKGIKAKRHQKMRQIISNVNALAEAGEMILVLGRPGAGCSSFLKVTAGEIDQFAGGVSGEVAYDGIPQEEMMKRYKADVIYNGELDVHFPYLTVKQTLDFAIACKTPALRVNNVSKKEYIASRRDLYATIFGLRHTYNTKVGNDFVRGVSGGERKRVSIAEALAAKGSIYCWDNATRGLDASTALEYAKAIRIMTNLLKSTAFVTIYQASENIYETFDKVTVLYSGKQIYFGLIHEAKPYFAKMGYLCPPRQATAEFLTALTDPNGFHLIKPGYENKVPRTAEEFETYWLNSPEFAQMKKDIAAYKEKVNTEKTKEVYDESMAQEKSKYTRKKSYYTVSYWEQVKLCTQRGFQRIYGNKSYTVINVCSAIIQSFITGSLFYNTPSSTSGAFSRGGVLYFALLYYSLMGLANISFEHRPILQKHKGYSLYHPSAEAIGSTLASFPFRMIGLTCFFIILFFLSGLHRTAGSFFTIYLFLTMCSEAINGLFEMVSSVCDTLSQANSISGILMMSISMYSTYMIQLPSMHPWFKWISYVLPIRYAFESMLNAEFHGRHMDCANTLVPSGGDYDNLSDDYKVCAFVGSKPGQSYVLGDDYLKNQFQYVYKHTWRNFGILWCFLLGYVVLKVIFTEYKRPVKGGGDALIFKKGSKRFIAHADEESPDNVNDIDAKEQFSSESSGANDEVFDDLEAKGVFIWKDVCFTIPYEGGKRMLLDNVSGYCIPGTMTALMGESGAGKTTLLNTLAQRNVGIITGDMLVNGRPIDASFERRTGYVQQQDIHIAELTVRESLQFSARMRRPQHLPDSEKMDYVEKIIRVLGMEEYAEALVGEVGCGLNVEQRKKLSIGVELVAKPDLLLFLDEPTSGLDSQSSWAIIQLLRKLSKAGQSILCTIHQPSATLFEEFDRLLLLRKGGQTVYFGDIGKNSATILNYFERNGARKCDSSENPAEYILEAIGAGATASVKEDWHEKWLNSVEFEQTKEKVQDLINDLSKQETKSEVGDKPSKYATSYAYQFRYVLIRTSTSFWRSLNYIMSKMMLMLVGGLYIGFTFFNVGKSYVGLQNAMFAAFISIILSAPAMNQIQGRAIASRELFEVRESQSNMFHWSLVLITQYLSELPYHLFFSTIFFVSSYFPLRIFFEASRSAVYFLNYCIMFQLYYVGLGLMILYMSPNLPSANVILGLCLSFMLSFCGVTQPVSLMPGFWTFMWKASPYTYFVQNLVGIMLHKKPVVCKKKELNYFNPPNGSTCGEYMKPFLEKATGYIENPDATSDCAYCIYEVGDNYLTHISSKYSYLWRNFGIFWIYIFFNIIAMVCVYYLFHVRQSSFLSPVSILNKIKNIRKKKQ</sequence>